<keyword id="KW-0328">Glycosyltransferase</keyword>
<keyword id="KW-1185">Reference proteome</keyword>
<keyword id="KW-0808">Transferase</keyword>
<evidence type="ECO:0000250" key="1">
    <source>
        <dbReference type="UniProtKB" id="A0A0A1HA03"/>
    </source>
</evidence>
<evidence type="ECO:0000250" key="2">
    <source>
        <dbReference type="UniProtKB" id="P51094"/>
    </source>
</evidence>
<evidence type="ECO:0000250" key="3">
    <source>
        <dbReference type="UniProtKB" id="Q9LNE6"/>
    </source>
</evidence>
<evidence type="ECO:0000269" key="4">
    <source>
    </source>
</evidence>
<evidence type="ECO:0000305" key="5"/>
<sequence>MDSVALNGKSNDKPLHVAMLPWLAMGHIYPYFEVAKILAQKGHFVTFINSPKNIDRMPKTPKHLEPFIKLVKLPLPKIEHLPEGAESTMDIPSKKNCFLKKAYEGLQYAVSKLLKTSNPDWVLYDFAAAWVIPIAKSYNIPCAHYNITPAFNKVFFDPPKDKMKDYSLASICGPPTWLPFTTTIHIRPYEFLRAYEGTKDEETGERASFDLNKAYSSCDLFLLRTSRELEGDWLDYLAGNYKVPVVPVGLLPPSMQIRDVEEEDNNPDWVRIKDWLDTQESSSVVYIGFGSELKLSQEDLTELAHGIELSNLPFFWALKNLKEGVLELPEGFEERTKERGIVWKTWAPQLKILAHGAIGGCMSHCGSGSVIEKVHFGHVLVTLPYLLDQCLFSRVLEEKQVAVEVPRSEKDGSFTRVDVAKTLRFAIVDEEGSALRENAKEMGKVFSSEELHNKYIQDFIDALQKYRIPSAS</sequence>
<dbReference type="EC" id="2.4.1.273" evidence="4"/>
<dbReference type="EMBL" id="AB473731">
    <property type="protein sequence ID" value="BAI99585.1"/>
    <property type="molecule type" value="mRNA"/>
</dbReference>
<dbReference type="EMBL" id="CM000841">
    <property type="status" value="NOT_ANNOTATED_CDS"/>
    <property type="molecule type" value="Genomic_DNA"/>
</dbReference>
<dbReference type="RefSeq" id="NP_001240857.1">
    <property type="nucleotide sequence ID" value="NM_001253928.1"/>
</dbReference>
<dbReference type="SMR" id="D4Q9Z5"/>
<dbReference type="STRING" id="3847.D4Q9Z5"/>
<dbReference type="CAZy" id="GT1">
    <property type="family name" value="Glycosyltransferase Family 1"/>
</dbReference>
<dbReference type="PaxDb" id="3847-GLYMA08G19290.1"/>
<dbReference type="ProMEX" id="D4Q9Z5"/>
<dbReference type="EnsemblPlants" id="KRH43927">
    <property type="protein sequence ID" value="KRH43927"/>
    <property type="gene ID" value="GLYMA_08G181000"/>
</dbReference>
<dbReference type="GeneID" id="100793463"/>
<dbReference type="Gramene" id="KRH43927">
    <property type="protein sequence ID" value="KRH43927"/>
    <property type="gene ID" value="GLYMA_08G181000"/>
</dbReference>
<dbReference type="KEGG" id="gmx:100793463"/>
<dbReference type="eggNOG" id="KOG1192">
    <property type="taxonomic scope" value="Eukaryota"/>
</dbReference>
<dbReference type="HOGENOM" id="CLU_001724_2_3_1"/>
<dbReference type="InParanoid" id="D4Q9Z5"/>
<dbReference type="OMA" id="ICGPPTW"/>
<dbReference type="OrthoDB" id="5835829at2759"/>
<dbReference type="BioCyc" id="MetaCyc:MONOMER-16513"/>
<dbReference type="BRENDA" id="2.4.1.273">
    <property type="organism ID" value="2483"/>
</dbReference>
<dbReference type="Proteomes" id="UP000008827">
    <property type="component" value="Chromosome 8"/>
</dbReference>
<dbReference type="GO" id="GO:0102241">
    <property type="term" value="F:soyasaponin III rhamnosyltransferase activity"/>
    <property type="evidence" value="ECO:0007669"/>
    <property type="project" value="UniProtKB-EC"/>
</dbReference>
<dbReference type="GO" id="GO:0035251">
    <property type="term" value="F:UDP-glucosyltransferase activity"/>
    <property type="evidence" value="ECO:0000318"/>
    <property type="project" value="GO_Central"/>
</dbReference>
<dbReference type="CDD" id="cd03784">
    <property type="entry name" value="GT1_Gtf-like"/>
    <property type="match status" value="1"/>
</dbReference>
<dbReference type="FunFam" id="3.40.50.2000:FF:000362">
    <property type="entry name" value="soyasaponin III rhamnosyltransferase"/>
    <property type="match status" value="1"/>
</dbReference>
<dbReference type="Gene3D" id="3.40.50.2000">
    <property type="entry name" value="Glycogen Phosphorylase B"/>
    <property type="match status" value="2"/>
</dbReference>
<dbReference type="InterPro" id="IPR050481">
    <property type="entry name" value="UDP-glycosyltransf_plant"/>
</dbReference>
<dbReference type="InterPro" id="IPR002213">
    <property type="entry name" value="UDP_glucos_trans"/>
</dbReference>
<dbReference type="PANTHER" id="PTHR48049">
    <property type="entry name" value="GLYCOSYLTRANSFERASE"/>
    <property type="match status" value="1"/>
</dbReference>
<dbReference type="PANTHER" id="PTHR48049:SF148">
    <property type="entry name" value="SOYASAPONIN III RHAMNOSYLTRANSFERASE"/>
    <property type="match status" value="1"/>
</dbReference>
<dbReference type="Pfam" id="PF00201">
    <property type="entry name" value="UDPGT"/>
    <property type="match status" value="1"/>
</dbReference>
<dbReference type="SUPFAM" id="SSF53756">
    <property type="entry name" value="UDP-Glycosyltransferase/glycogen phosphorylase"/>
    <property type="match status" value="1"/>
</dbReference>
<protein>
    <recommendedName>
        <fullName>Soyasaponin III rhamnosyltransferase</fullName>
        <ecNumber evidence="4">2.4.1.273</ecNumber>
    </recommendedName>
    <alternativeName>
        <fullName>Soyasaponin glycosyltransferase 3</fullName>
    </alternativeName>
    <alternativeName>
        <fullName>UDP-rhamnose:soyasaponin III-rhamnosyltransferase</fullName>
    </alternativeName>
</protein>
<accession>D4Q9Z5</accession>
<proteinExistence type="evidence at protein level"/>
<comment type="function">
    <text evidence="4">Glycosyltransferase that transfers a rhamnosyl group from UDP-rhamnose to soyasaponin III in the biosynthetic pathway for soyasaponins.</text>
</comment>
<comment type="catalytic activity">
    <reaction evidence="4">
        <text>soyasaponin III + UDP-beta-L-rhamnose = soyasaponin I + UDP + H(+)</text>
        <dbReference type="Rhea" id="RHEA:31491"/>
        <dbReference type="ChEBI" id="CHEBI:15378"/>
        <dbReference type="ChEBI" id="CHEBI:58223"/>
        <dbReference type="ChEBI" id="CHEBI:62911"/>
        <dbReference type="ChEBI" id="CHEBI:62916"/>
        <dbReference type="ChEBI" id="CHEBI:83836"/>
        <dbReference type="EC" id="2.4.1.273"/>
    </reaction>
</comment>
<comment type="similarity">
    <text evidence="5">Belongs to the UDP-glycosyltransferase family.</text>
</comment>
<organism>
    <name type="scientific">Glycine max</name>
    <name type="common">Soybean</name>
    <name type="synonym">Glycine hispida</name>
    <dbReference type="NCBI Taxonomy" id="3847"/>
    <lineage>
        <taxon>Eukaryota</taxon>
        <taxon>Viridiplantae</taxon>
        <taxon>Streptophyta</taxon>
        <taxon>Embryophyta</taxon>
        <taxon>Tracheophyta</taxon>
        <taxon>Spermatophyta</taxon>
        <taxon>Magnoliopsida</taxon>
        <taxon>eudicotyledons</taxon>
        <taxon>Gunneridae</taxon>
        <taxon>Pentapetalae</taxon>
        <taxon>rosids</taxon>
        <taxon>fabids</taxon>
        <taxon>Fabales</taxon>
        <taxon>Fabaceae</taxon>
        <taxon>Papilionoideae</taxon>
        <taxon>50 kb inversion clade</taxon>
        <taxon>NPAAA clade</taxon>
        <taxon>indigoferoid/millettioid clade</taxon>
        <taxon>Phaseoleae</taxon>
        <taxon>Glycine</taxon>
        <taxon>Glycine subgen. Soja</taxon>
    </lineage>
</organism>
<reference key="1">
    <citation type="journal article" date="2010" name="FEBS Lett.">
        <title>Identification and characterization of glycosyltransferases involved in the biosynthesis of soyasaponin I in Glycine max.</title>
        <authorList>
            <person name="Shibuya M."/>
            <person name="Nishimura K."/>
            <person name="Yasuyama N."/>
            <person name="Ebizuka Y."/>
        </authorList>
    </citation>
    <scope>NUCLEOTIDE SEQUENCE [MRNA]</scope>
    <scope>FUNCTION</scope>
    <scope>CATALYTIC ACTIVITY</scope>
</reference>
<reference key="2">
    <citation type="journal article" date="2010" name="Nature">
        <title>Genome sequence of the palaeopolyploid soybean.</title>
        <authorList>
            <person name="Schmutz J."/>
            <person name="Cannon S.B."/>
            <person name="Schlueter J."/>
            <person name="Ma J."/>
            <person name="Mitros T."/>
            <person name="Nelson W."/>
            <person name="Hyten D.L."/>
            <person name="Song Q."/>
            <person name="Thelen J.J."/>
            <person name="Cheng J."/>
            <person name="Xu D."/>
            <person name="Hellsten U."/>
            <person name="May G.D."/>
            <person name="Yu Y."/>
            <person name="Sakurai T."/>
            <person name="Umezawa T."/>
            <person name="Bhattacharyya M.K."/>
            <person name="Sandhu D."/>
            <person name="Valliyodan B."/>
            <person name="Lindquist E."/>
            <person name="Peto M."/>
            <person name="Grant D."/>
            <person name="Shu S."/>
            <person name="Goodstein D."/>
            <person name="Barry K."/>
            <person name="Futrell-Griggs M."/>
            <person name="Abernathy B."/>
            <person name="Du J."/>
            <person name="Tian Z."/>
            <person name="Zhu L."/>
            <person name="Gill N."/>
            <person name="Joshi T."/>
            <person name="Libault M."/>
            <person name="Sethuraman A."/>
            <person name="Zhang X.-C."/>
            <person name="Shinozaki K."/>
            <person name="Nguyen H.T."/>
            <person name="Wing R.A."/>
            <person name="Cregan P."/>
            <person name="Specht J."/>
            <person name="Grimwood J."/>
            <person name="Rokhsar D."/>
            <person name="Stacey G."/>
            <person name="Shoemaker R.C."/>
            <person name="Jackson S.A."/>
        </authorList>
    </citation>
    <scope>NUCLEOTIDE SEQUENCE [LARGE SCALE GENOMIC DNA]</scope>
    <source>
        <strain>cv. Williams 82</strain>
    </source>
</reference>
<feature type="chain" id="PRO_0000418729" description="Soyasaponin III rhamnosyltransferase">
    <location>
        <begin position="1"/>
        <end position="472"/>
    </location>
</feature>
<feature type="active site" description="Proton acceptor" evidence="1">
    <location>
        <position position="27"/>
    </location>
</feature>
<feature type="active site" description="Charge relay" evidence="1">
    <location>
        <position position="125"/>
    </location>
</feature>
<feature type="binding site" evidence="2">
    <location>
        <position position="27"/>
    </location>
    <ligand>
        <name>an anthocyanidin</name>
        <dbReference type="ChEBI" id="CHEBI:143576"/>
    </ligand>
</feature>
<feature type="binding site" evidence="3">
    <location>
        <position position="291"/>
    </location>
    <ligand>
        <name>UDP-beta-L-rhamnose</name>
        <dbReference type="ChEBI" id="CHEBI:83836"/>
    </ligand>
</feature>
<feature type="binding site" evidence="3">
    <location>
        <position position="347"/>
    </location>
    <ligand>
        <name>UDP-beta-L-rhamnose</name>
        <dbReference type="ChEBI" id="CHEBI:83836"/>
    </ligand>
</feature>
<feature type="binding site" evidence="3">
    <location>
        <position position="364"/>
    </location>
    <ligand>
        <name>UDP-beta-L-rhamnose</name>
        <dbReference type="ChEBI" id="CHEBI:83836"/>
    </ligand>
</feature>
<feature type="binding site" evidence="3">
    <location>
        <position position="368"/>
    </location>
    <ligand>
        <name>UDP-beta-L-rhamnose</name>
        <dbReference type="ChEBI" id="CHEBI:83836"/>
    </ligand>
</feature>
<feature type="binding site" evidence="3">
    <location>
        <position position="369"/>
    </location>
    <ligand>
        <name>UDP-beta-L-rhamnose</name>
        <dbReference type="ChEBI" id="CHEBI:83836"/>
    </ligand>
</feature>
<feature type="binding site" evidence="3">
    <location>
        <position position="372"/>
    </location>
    <ligand>
        <name>UDP-beta-L-rhamnose</name>
        <dbReference type="ChEBI" id="CHEBI:83836"/>
    </ligand>
</feature>
<name>SGT3_SOYBN</name>
<gene>
    <name type="primary">GmSGT3</name>
    <name type="ordered locus">Glyma08g19290</name>
    <name type="ORF">Gma.55603</name>
</gene>